<feature type="chain" id="PRO_0000163466" description="Large ribosomal subunit protein bL19">
    <location>
        <begin position="1"/>
        <end position="118"/>
    </location>
</feature>
<organism>
    <name type="scientific">Helicobacter pylori (strain J99 / ATCC 700824)</name>
    <name type="common">Campylobacter pylori J99</name>
    <dbReference type="NCBI Taxonomy" id="85963"/>
    <lineage>
        <taxon>Bacteria</taxon>
        <taxon>Pseudomonadati</taxon>
        <taxon>Campylobacterota</taxon>
        <taxon>Epsilonproteobacteria</taxon>
        <taxon>Campylobacterales</taxon>
        <taxon>Helicobacteraceae</taxon>
        <taxon>Helicobacter</taxon>
    </lineage>
</organism>
<accession>Q9ZK67</accession>
<reference key="1">
    <citation type="journal article" date="1999" name="Nature">
        <title>Genomic sequence comparison of two unrelated isolates of the human gastric pathogen Helicobacter pylori.</title>
        <authorList>
            <person name="Alm R.A."/>
            <person name="Ling L.-S.L."/>
            <person name="Moir D.T."/>
            <person name="King B.L."/>
            <person name="Brown E.D."/>
            <person name="Doig P.C."/>
            <person name="Smith D.R."/>
            <person name="Noonan B."/>
            <person name="Guild B.C."/>
            <person name="deJonge B.L."/>
            <person name="Carmel G."/>
            <person name="Tummino P.J."/>
            <person name="Caruso A."/>
            <person name="Uria-Nickelsen M."/>
            <person name="Mills D.M."/>
            <person name="Ives C."/>
            <person name="Gibson R."/>
            <person name="Merberg D."/>
            <person name="Mills S.D."/>
            <person name="Jiang Q."/>
            <person name="Taylor D.E."/>
            <person name="Vovis G.F."/>
            <person name="Trust T.J."/>
        </authorList>
    </citation>
    <scope>NUCLEOTIDE SEQUENCE [LARGE SCALE GENOMIC DNA]</scope>
    <source>
        <strain>J99 / ATCC 700824</strain>
    </source>
</reference>
<sequence>MKNRYIQQFEDAQLKDKSMPTFKAGDTLRLGITIKEGEKTRTQYFEGVCIAIRGNGVDKTFCVRKIGANNIGVEKIFPFYSESLASVEVLRVGRVRRAKLYYLRDRRGKAARIKEVRH</sequence>
<gene>
    <name type="primary">rplS</name>
    <name type="ordered locus">jhp_1074</name>
</gene>
<comment type="function">
    <text evidence="1">This protein is located at the 30S-50S ribosomal subunit interface and may play a role in the structure and function of the aminoacyl-tRNA binding site.</text>
</comment>
<comment type="similarity">
    <text evidence="2">Belongs to the bacterial ribosomal protein bL19 family.</text>
</comment>
<evidence type="ECO:0000250" key="1"/>
<evidence type="ECO:0000305" key="2"/>
<proteinExistence type="inferred from homology"/>
<name>RL19_HELPJ</name>
<keyword id="KW-0687">Ribonucleoprotein</keyword>
<keyword id="KW-0689">Ribosomal protein</keyword>
<protein>
    <recommendedName>
        <fullName evidence="2">Large ribosomal subunit protein bL19</fullName>
    </recommendedName>
    <alternativeName>
        <fullName>50S ribosomal protein L19</fullName>
    </alternativeName>
</protein>
<dbReference type="EMBL" id="AE001439">
    <property type="protein sequence ID" value="AAD06654.1"/>
    <property type="molecule type" value="Genomic_DNA"/>
</dbReference>
<dbReference type="PIR" id="G71851">
    <property type="entry name" value="G71851"/>
</dbReference>
<dbReference type="RefSeq" id="WP_000797689.1">
    <property type="nucleotide sequence ID" value="NZ_CP011330.1"/>
</dbReference>
<dbReference type="SMR" id="Q9ZK67"/>
<dbReference type="KEGG" id="hpj:jhp_1074"/>
<dbReference type="PATRIC" id="fig|85963.30.peg.1509"/>
<dbReference type="eggNOG" id="COG0335">
    <property type="taxonomic scope" value="Bacteria"/>
</dbReference>
<dbReference type="Proteomes" id="UP000000804">
    <property type="component" value="Chromosome"/>
</dbReference>
<dbReference type="GO" id="GO:0022625">
    <property type="term" value="C:cytosolic large ribosomal subunit"/>
    <property type="evidence" value="ECO:0007669"/>
    <property type="project" value="TreeGrafter"/>
</dbReference>
<dbReference type="GO" id="GO:0003735">
    <property type="term" value="F:structural constituent of ribosome"/>
    <property type="evidence" value="ECO:0007669"/>
    <property type="project" value="InterPro"/>
</dbReference>
<dbReference type="GO" id="GO:0006412">
    <property type="term" value="P:translation"/>
    <property type="evidence" value="ECO:0007669"/>
    <property type="project" value="UniProtKB-UniRule"/>
</dbReference>
<dbReference type="FunFam" id="2.30.30.790:FF:000001">
    <property type="entry name" value="50S ribosomal protein L19"/>
    <property type="match status" value="1"/>
</dbReference>
<dbReference type="Gene3D" id="2.30.30.790">
    <property type="match status" value="1"/>
</dbReference>
<dbReference type="HAMAP" id="MF_00402">
    <property type="entry name" value="Ribosomal_bL19"/>
    <property type="match status" value="1"/>
</dbReference>
<dbReference type="InterPro" id="IPR001857">
    <property type="entry name" value="Ribosomal_bL19"/>
</dbReference>
<dbReference type="InterPro" id="IPR018257">
    <property type="entry name" value="Ribosomal_bL19_CS"/>
</dbReference>
<dbReference type="InterPro" id="IPR038657">
    <property type="entry name" value="Ribosomal_bL19_sf"/>
</dbReference>
<dbReference type="InterPro" id="IPR008991">
    <property type="entry name" value="Translation_prot_SH3-like_sf"/>
</dbReference>
<dbReference type="NCBIfam" id="TIGR01024">
    <property type="entry name" value="rplS_bact"/>
    <property type="match status" value="1"/>
</dbReference>
<dbReference type="PANTHER" id="PTHR15680:SF9">
    <property type="entry name" value="LARGE RIBOSOMAL SUBUNIT PROTEIN BL19M"/>
    <property type="match status" value="1"/>
</dbReference>
<dbReference type="PANTHER" id="PTHR15680">
    <property type="entry name" value="RIBOSOMAL PROTEIN L19"/>
    <property type="match status" value="1"/>
</dbReference>
<dbReference type="Pfam" id="PF01245">
    <property type="entry name" value="Ribosomal_L19"/>
    <property type="match status" value="1"/>
</dbReference>
<dbReference type="PIRSF" id="PIRSF002191">
    <property type="entry name" value="Ribosomal_L19"/>
    <property type="match status" value="1"/>
</dbReference>
<dbReference type="PRINTS" id="PR00061">
    <property type="entry name" value="RIBOSOMALL19"/>
</dbReference>
<dbReference type="SUPFAM" id="SSF50104">
    <property type="entry name" value="Translation proteins SH3-like domain"/>
    <property type="match status" value="1"/>
</dbReference>
<dbReference type="PROSITE" id="PS01015">
    <property type="entry name" value="RIBOSOMAL_L19"/>
    <property type="match status" value="1"/>
</dbReference>